<sequence length="1302" mass="149079">MELYFGEYQHVQQEYGVHLRLASDDTQKSRSSQNSKAGSYGVSIRVQGIDGHPYIVLNNTERCLAGTSFSENGPPFPPPVINNLPLHSSNGSVPKENSEELQLPENPYAQPSPIRNLKQPLLHEGKNGVLDRKDGSVKPSHLLNFQRHPELLQPYDPEKNELNLQNHQPSESNWLKTLTEEGINNKKPWTCFPKPSNSQPTSPSLEDPAKSGVTAIRLCSSVVIEDPKKQTSVCVNVQSCTKERVGEEALFTSGRPLTAHSPHAHPETKKTRPDVLPFRRQDSAGPVLDGARSRRSSSSSTTPTSANSLYRFLLDDQECAIHADNVNRHENRRYIPFLPGTGRDIDTGSIPGVDQLIEKFDQKPGLQRRGRSGKRNRINTDDRKRSRSVDSAFPFGLQGNSEYLIEFSRNLGKSSEHLLRPSQVCPQRPLSQERRGKQSVGRTFAKLQGAAHGASCAHSRPPQPNIDGKVLETEGSQESTVIRAPSLGAQSKKEEEVKTATATLMLQNRATATSPDSGAKKISVKTFPSASNTQATPDLLKGQQELTQQTNEETAKQILYNYLKEGSTDNDDATKRKVNLVFEKIQTLKSRAAGSAQGNNQACNSTSEVKDLLEQKSKLTIEVAELQRQLQLEVKNQQNIKEERERMRANLEELRSQHNEKVEENSTLQQRLEESEGELRKNLEELFQVKMEREQHQTEIRDLQDQLSEMHDELDSAKRSEDREKGALIEELLQAKQDLQDLLIAKEEQEDLLRKRERELTALKGALKEEVSSHDQEMDKLKEQYDAELQALRESVEEATKNVEVLASRSNTSEQDQAGTEMRVKLLQEENEKLQGRSEELERRVAQLQRQIEDLKGDEAKAKETLKKYEGEIRQLEEALVHARKEEKEAVSARRALENELEAAQGNLSQTTQEQKQLSEKLKEESEQKEQLRRLKNEMENERWHLGKTIEKLQKEMADIVEASRTSTLELQNQLDEYKEKNRRELAEMQRQLKEKTLEAEKSRLTAMKMQDEMRLMEEELRDYQRAQDEALTKRQLLEQTLKDLEYELEAKSHLKDDRSRLVKQMEDKVSQLEMELEEERNNSDLLSERISRSREQMEQLRNELLQERAARQDLECDKISLERQNKDLKSRIIHLEGSYRSSKEGLVVQMEARIAELEDRLESEERDRANLQLSNRRLERKVKELVMQVDDEHLSLTDQKDQLSLRLKAMKRQVEEAEEEIDRLESSKKKLQRELEEQMDMNEHLQGQLNSMKKDLRLKKLPSKVLDDMDDDDDLSTDGGSLYEAPVSYTFSKDSTVASQI</sequence>
<protein>
    <recommendedName>
        <fullName>Cingulin-like protein 1</fullName>
    </recommendedName>
    <alternativeName>
        <fullName>Junction-associated coiled-coil protein</fullName>
    </alternativeName>
    <alternativeName>
        <fullName>Paracingulin</fullName>
    </alternativeName>
</protein>
<feature type="chain" id="PRO_0000312875" description="Cingulin-like protein 1">
    <location>
        <begin position="1"/>
        <end position="1302"/>
    </location>
</feature>
<feature type="region of interest" description="Head">
    <location>
        <begin position="1"/>
        <end position="554"/>
    </location>
</feature>
<feature type="region of interest" description="Disordered" evidence="4">
    <location>
        <begin position="75"/>
        <end position="104"/>
    </location>
</feature>
<feature type="region of interest" description="Disordered" evidence="4">
    <location>
        <begin position="186"/>
        <end position="209"/>
    </location>
</feature>
<feature type="region of interest" description="Disordered" evidence="4">
    <location>
        <begin position="251"/>
        <end position="305"/>
    </location>
</feature>
<feature type="region of interest" description="Disordered" evidence="4">
    <location>
        <begin position="364"/>
        <end position="392"/>
    </location>
</feature>
<feature type="region of interest" description="Disordered" evidence="4">
    <location>
        <begin position="655"/>
        <end position="675"/>
    </location>
</feature>
<feature type="region of interest" description="Disordered" evidence="4">
    <location>
        <begin position="903"/>
        <end position="929"/>
    </location>
</feature>
<feature type="region of interest" description="Tail">
    <location>
        <begin position="1263"/>
        <end position="1302"/>
    </location>
</feature>
<feature type="region of interest" description="Disordered" evidence="4">
    <location>
        <begin position="1263"/>
        <end position="1287"/>
    </location>
</feature>
<feature type="coiled-coil region" evidence="3">
    <location>
        <begin position="604"/>
        <end position="1258"/>
    </location>
</feature>
<feature type="short sequence motif" description="ZIM" evidence="1">
    <location>
        <begin position="37"/>
        <end position="51"/>
    </location>
</feature>
<feature type="compositionally biased region" description="Polar residues" evidence="4">
    <location>
        <begin position="195"/>
        <end position="204"/>
    </location>
</feature>
<feature type="compositionally biased region" description="Basic and acidic residues" evidence="4">
    <location>
        <begin position="264"/>
        <end position="282"/>
    </location>
</feature>
<feature type="compositionally biased region" description="Low complexity" evidence="4">
    <location>
        <begin position="296"/>
        <end position="305"/>
    </location>
</feature>
<feature type="compositionally biased region" description="Basic residues" evidence="4">
    <location>
        <begin position="366"/>
        <end position="377"/>
    </location>
</feature>
<feature type="compositionally biased region" description="Basic and acidic residues" evidence="4">
    <location>
        <begin position="378"/>
        <end position="388"/>
    </location>
</feature>
<feature type="compositionally biased region" description="Basic and acidic residues" evidence="4">
    <location>
        <begin position="655"/>
        <end position="664"/>
    </location>
</feature>
<feature type="compositionally biased region" description="Basic and acidic residues" evidence="4">
    <location>
        <begin position="917"/>
        <end position="929"/>
    </location>
</feature>
<feature type="modified residue" description="Phosphoserine" evidence="15">
    <location>
        <position position="112"/>
    </location>
</feature>
<feature type="modified residue" description="Phosphoserine" evidence="2">
    <location>
        <position position="202"/>
    </location>
</feature>
<feature type="modified residue" description="Phosphoserine" evidence="14 15">
    <location>
        <position position="283"/>
    </location>
</feature>
<feature type="modified residue" description="Phosphoserine" evidence="14">
    <location>
        <position position="297"/>
    </location>
</feature>
<feature type="modified residue" description="Phosphoserine" evidence="14 15">
    <location>
        <position position="298"/>
    </location>
</feature>
<feature type="modified residue" description="Phosphoserine" evidence="15">
    <location>
        <position position="388"/>
    </location>
</feature>
<feature type="modified residue" description="Phosphoserine" evidence="15">
    <location>
        <position position="391"/>
    </location>
</feature>
<feature type="modified residue" description="Phosphoserine" evidence="15">
    <location>
        <position position="486"/>
    </location>
</feature>
<feature type="modified residue" description="Phosphoserine" evidence="15">
    <location>
        <position position="708"/>
    </location>
</feature>
<feature type="splice variant" id="VSP_029946" description="In isoform 2." evidence="12">
    <location>
        <begin position="1"/>
        <end position="690"/>
    </location>
</feature>
<feature type="sequence variant" id="VAR_037606" description="In dbSNP:rs1280395." evidence="7 8 10 11">
    <original>T</original>
    <variation>P</variation>
    <location>
        <position position="380"/>
    </location>
</feature>
<feature type="sequence variant" id="VAR_037607" description="In dbSNP:rs7182648." evidence="8">
    <original>S</original>
    <variation>F</variation>
    <location>
        <position position="459"/>
    </location>
</feature>
<feature type="sequence variant" id="VAR_037608" description="In dbSNP:rs1280396." evidence="7 8 10 11 14">
    <original>T</original>
    <variation>A</variation>
    <location>
        <position position="511"/>
    </location>
</feature>
<feature type="sequence variant" id="VAR_037609" description="In dbSNP:rs1620402." evidence="5">
    <original>L</original>
    <variation>V</variation>
    <location>
        <position position="1101"/>
    </location>
</feature>
<feature type="sequence variant" id="VAR_037610" description="In dbSNP:rs16977594.">
    <original>M</original>
    <variation>V</variation>
    <location>
        <position position="1270"/>
    </location>
</feature>
<feature type="sequence conflict" description="In Ref. 1; AAT37906." evidence="13" ref="1">
    <original>S</original>
    <variation>G</variation>
    <location>
        <position position="239"/>
    </location>
</feature>
<feature type="sequence conflict" description="In Ref. 1; AAT37906." evidence="13" ref="1">
    <original>F</original>
    <variation>I</variation>
    <location>
        <position position="278"/>
    </location>
</feature>
<feature type="sequence conflict" description="In Ref. 1; AAT37906." evidence="13" ref="1">
    <original>S</original>
    <variation>P</variation>
    <location>
        <position position="305"/>
    </location>
</feature>
<feature type="sequence conflict" description="In Ref. 1; AAT37906 and 3; BAB55415." evidence="13" ref="1 3">
    <original>EQ</original>
    <variation>GR</variation>
    <location>
        <begin position="748"/>
        <end position="749"/>
    </location>
</feature>
<feature type="sequence conflict" description="In Ref. 3; BAB71249." evidence="13" ref="3">
    <original>K</original>
    <variation>N</variation>
    <location>
        <position position="833"/>
    </location>
</feature>
<feature type="sequence conflict" description="In Ref. 3; BAB71249." evidence="13" ref="3">
    <original>Y</original>
    <variation>F</variation>
    <location>
        <position position="869"/>
    </location>
</feature>
<feature type="sequence conflict" description="In Ref. 3; BAB55415." evidence="13" ref="3">
    <original>A</original>
    <variation>V</variation>
    <location>
        <position position="883"/>
    </location>
</feature>
<feature type="sequence conflict" description="In Ref. 1; AAT37906." evidence="13" ref="1">
    <original>A</original>
    <variation>G</variation>
    <location>
        <position position="903"/>
    </location>
</feature>
<feature type="sequence conflict" description="In Ref. 1; AAT37906 and 3; BAB55415." evidence="13" ref="1 3">
    <original>E</original>
    <variation>G</variation>
    <location>
        <position position="1013"/>
    </location>
</feature>
<feature type="sequence conflict" description="In Ref. 1; AAT37906." evidence="13" ref="1">
    <original>D</original>
    <variation>A</variation>
    <location>
        <position position="1068"/>
    </location>
</feature>
<feature type="sequence conflict" description="In Ref. 3; BAB55415." evidence="13" ref="3">
    <original>S</original>
    <variation>T</variation>
    <location>
        <position position="1088"/>
    </location>
</feature>
<feature type="sequence conflict" description="In Ref. 1; AAT37906." evidence="13" ref="1">
    <original>E</original>
    <variation>G</variation>
    <location>
        <position position="1104"/>
    </location>
</feature>
<feature type="sequence conflict" description="In Ref. 1; AAT37906." evidence="13" ref="1">
    <original>D</original>
    <variation>G</variation>
    <location>
        <position position="1118"/>
    </location>
</feature>
<name>CGNL1_HUMAN</name>
<accession>Q0VF96</accession>
<accession>Q05BZ4</accession>
<accession>Q52LR0</accession>
<accession>Q695C7</accession>
<accession>Q7Z2L3</accession>
<accession>Q96JV2</accession>
<accession>Q96MN6</accession>
<accession>Q9C0B4</accession>
<reference key="1">
    <citation type="submission" date="2004-04" db="EMBL/GenBank/DDBJ databases">
        <authorList>
            <person name="Citi S."/>
        </authorList>
    </citation>
    <scope>NUCLEOTIDE SEQUENCE [MRNA] (ISOFORM 1)</scope>
    <scope>VARIANTS PRO-380 AND ALA-511</scope>
</reference>
<reference key="2">
    <citation type="submission" date="2003-04" db="EMBL/GenBank/DDBJ databases">
        <authorList>
            <person name="Shan Y.X."/>
            <person name="Huang C.Q."/>
            <person name="Guo Z.K."/>
            <person name="Pan J."/>
            <person name="Gen D.C."/>
            <person name="Yu L."/>
        </authorList>
    </citation>
    <scope>NUCLEOTIDE SEQUENCE [LARGE SCALE MRNA] (ISOFORM 1)</scope>
</reference>
<reference key="3">
    <citation type="journal article" date="2004" name="Nat. Genet.">
        <title>Complete sequencing and characterization of 21,243 full-length human cDNAs.</title>
        <authorList>
            <person name="Ota T."/>
            <person name="Suzuki Y."/>
            <person name="Nishikawa T."/>
            <person name="Otsuki T."/>
            <person name="Sugiyama T."/>
            <person name="Irie R."/>
            <person name="Wakamatsu A."/>
            <person name="Hayashi K."/>
            <person name="Sato H."/>
            <person name="Nagai K."/>
            <person name="Kimura K."/>
            <person name="Makita H."/>
            <person name="Sekine M."/>
            <person name="Obayashi M."/>
            <person name="Nishi T."/>
            <person name="Shibahara T."/>
            <person name="Tanaka T."/>
            <person name="Ishii S."/>
            <person name="Yamamoto J."/>
            <person name="Saito K."/>
            <person name="Kawai Y."/>
            <person name="Isono Y."/>
            <person name="Nakamura Y."/>
            <person name="Nagahari K."/>
            <person name="Murakami K."/>
            <person name="Yasuda T."/>
            <person name="Iwayanagi T."/>
            <person name="Wagatsuma M."/>
            <person name="Shiratori A."/>
            <person name="Sudo H."/>
            <person name="Hosoiri T."/>
            <person name="Kaku Y."/>
            <person name="Kodaira H."/>
            <person name="Kondo H."/>
            <person name="Sugawara M."/>
            <person name="Takahashi M."/>
            <person name="Kanda K."/>
            <person name="Yokoi T."/>
            <person name="Furuya T."/>
            <person name="Kikkawa E."/>
            <person name="Omura Y."/>
            <person name="Abe K."/>
            <person name="Kamihara K."/>
            <person name="Katsuta N."/>
            <person name="Sato K."/>
            <person name="Tanikawa M."/>
            <person name="Yamazaki M."/>
            <person name="Ninomiya K."/>
            <person name="Ishibashi T."/>
            <person name="Yamashita H."/>
            <person name="Murakawa K."/>
            <person name="Fujimori K."/>
            <person name="Tanai H."/>
            <person name="Kimata M."/>
            <person name="Watanabe M."/>
            <person name="Hiraoka S."/>
            <person name="Chiba Y."/>
            <person name="Ishida S."/>
            <person name="Ono Y."/>
            <person name="Takiguchi S."/>
            <person name="Watanabe S."/>
            <person name="Yosida M."/>
            <person name="Hotuta T."/>
            <person name="Kusano J."/>
            <person name="Kanehori K."/>
            <person name="Takahashi-Fujii A."/>
            <person name="Hara H."/>
            <person name="Tanase T.-O."/>
            <person name="Nomura Y."/>
            <person name="Togiya S."/>
            <person name="Komai F."/>
            <person name="Hara R."/>
            <person name="Takeuchi K."/>
            <person name="Arita M."/>
            <person name="Imose N."/>
            <person name="Musashino K."/>
            <person name="Yuuki H."/>
            <person name="Oshima A."/>
            <person name="Sasaki N."/>
            <person name="Aotsuka S."/>
            <person name="Yoshikawa Y."/>
            <person name="Matsunawa H."/>
            <person name="Ichihara T."/>
            <person name="Shiohata N."/>
            <person name="Sano S."/>
            <person name="Moriya S."/>
            <person name="Momiyama H."/>
            <person name="Satoh N."/>
            <person name="Takami S."/>
            <person name="Terashima Y."/>
            <person name="Suzuki O."/>
            <person name="Nakagawa S."/>
            <person name="Senoh A."/>
            <person name="Mizoguchi H."/>
            <person name="Goto Y."/>
            <person name="Shimizu F."/>
            <person name="Wakebe H."/>
            <person name="Hishigaki H."/>
            <person name="Watanabe T."/>
            <person name="Sugiyama A."/>
            <person name="Takemoto M."/>
            <person name="Kawakami B."/>
            <person name="Yamazaki M."/>
            <person name="Watanabe K."/>
            <person name="Kumagai A."/>
            <person name="Itakura S."/>
            <person name="Fukuzumi Y."/>
            <person name="Fujimori Y."/>
            <person name="Komiyama M."/>
            <person name="Tashiro H."/>
            <person name="Tanigami A."/>
            <person name="Fujiwara T."/>
            <person name="Ono T."/>
            <person name="Yamada K."/>
            <person name="Fujii Y."/>
            <person name="Ozaki K."/>
            <person name="Hirao M."/>
            <person name="Ohmori Y."/>
            <person name="Kawabata A."/>
            <person name="Hikiji T."/>
            <person name="Kobatake N."/>
            <person name="Inagaki H."/>
            <person name="Ikema Y."/>
            <person name="Okamoto S."/>
            <person name="Okitani R."/>
            <person name="Kawakami T."/>
            <person name="Noguchi S."/>
            <person name="Itoh T."/>
            <person name="Shigeta K."/>
            <person name="Senba T."/>
            <person name="Matsumura K."/>
            <person name="Nakajima Y."/>
            <person name="Mizuno T."/>
            <person name="Morinaga M."/>
            <person name="Sasaki M."/>
            <person name="Togashi T."/>
            <person name="Oyama M."/>
            <person name="Hata H."/>
            <person name="Watanabe M."/>
            <person name="Komatsu T."/>
            <person name="Mizushima-Sugano J."/>
            <person name="Satoh T."/>
            <person name="Shirai Y."/>
            <person name="Takahashi Y."/>
            <person name="Nakagawa K."/>
            <person name="Okumura K."/>
            <person name="Nagase T."/>
            <person name="Nomura N."/>
            <person name="Kikuchi H."/>
            <person name="Masuho Y."/>
            <person name="Yamashita R."/>
            <person name="Nakai K."/>
            <person name="Yada T."/>
            <person name="Nakamura Y."/>
            <person name="Ohara O."/>
            <person name="Isogai T."/>
            <person name="Sugano S."/>
        </authorList>
    </citation>
    <scope>NUCLEOTIDE SEQUENCE [LARGE SCALE MRNA] (ISOFORM 2)</scope>
    <scope>NUCLEOTIDE SEQUENCE [LARGE SCALE MRNA] OF 1-883 (ISOFORM 1)</scope>
    <scope>VARIANTS PRO-380 AND ALA-511</scope>
    <source>
        <tissue>Brain</tissue>
        <tissue>Placenta</tissue>
    </source>
</reference>
<reference key="4">
    <citation type="submission" date="2005-07" db="EMBL/GenBank/DDBJ databases">
        <authorList>
            <person name="Mural R.J."/>
            <person name="Istrail S."/>
            <person name="Sutton G.G."/>
            <person name="Florea L."/>
            <person name="Halpern A.L."/>
            <person name="Mobarry C.M."/>
            <person name="Lippert R."/>
            <person name="Walenz B."/>
            <person name="Shatkay H."/>
            <person name="Dew I."/>
            <person name="Miller J.R."/>
            <person name="Flanigan M.J."/>
            <person name="Edwards N.J."/>
            <person name="Bolanos R."/>
            <person name="Fasulo D."/>
            <person name="Halldorsson B.V."/>
            <person name="Hannenhalli S."/>
            <person name="Turner R."/>
            <person name="Yooseph S."/>
            <person name="Lu F."/>
            <person name="Nusskern D.R."/>
            <person name="Shue B.C."/>
            <person name="Zheng X.H."/>
            <person name="Zhong F."/>
            <person name="Delcher A.L."/>
            <person name="Huson D.H."/>
            <person name="Kravitz S.A."/>
            <person name="Mouchard L."/>
            <person name="Reinert K."/>
            <person name="Remington K.A."/>
            <person name="Clark A.G."/>
            <person name="Waterman M.S."/>
            <person name="Eichler E.E."/>
            <person name="Adams M.D."/>
            <person name="Hunkapiller M.W."/>
            <person name="Myers E.W."/>
            <person name="Venter J.C."/>
        </authorList>
    </citation>
    <scope>NUCLEOTIDE SEQUENCE [LARGE SCALE GENOMIC DNA]</scope>
    <scope>VARIANTS PRO-380 AND ALA-511</scope>
</reference>
<reference key="5">
    <citation type="journal article" date="2004" name="Genome Res.">
        <title>The status, quality, and expansion of the NIH full-length cDNA project: the Mammalian Gene Collection (MGC).</title>
        <authorList>
            <consortium name="The MGC Project Team"/>
        </authorList>
    </citation>
    <scope>NUCLEOTIDE SEQUENCE [LARGE SCALE MRNA] (ISOFORM 1)</scope>
    <scope>VARIANTS PRO-380; PHE-459 AND ALA-511</scope>
    <source>
        <tissue>Colon</tissue>
        <tissue>Kidney</tissue>
    </source>
</reference>
<reference key="6">
    <citation type="journal article" date="2000" name="DNA Res.">
        <title>Prediction of the coding sequences of unidentified human genes. XIX. The complete sequences of 100 new cDNA clones from brain which code for large proteins in vitro.</title>
        <authorList>
            <person name="Nagase T."/>
            <person name="Kikuno R."/>
            <person name="Hattori A."/>
            <person name="Kondo Y."/>
            <person name="Okumura K."/>
            <person name="Ohara O."/>
        </authorList>
    </citation>
    <scope>NUCLEOTIDE SEQUENCE [LARGE SCALE MRNA] OF 256-1302 (ISOFORM 1)</scope>
    <scope>VARIANT VAL-1101</scope>
    <scope>TISSUE SPECIFICITY</scope>
    <source>
        <tissue>Brain</tissue>
    </source>
</reference>
<reference key="7">
    <citation type="submission" date="2003-04" db="EMBL/GenBank/DDBJ databases">
        <authorList>
            <person name="Ohara O."/>
            <person name="Nagase T."/>
            <person name="Yamakawa H."/>
            <person name="Kikuno R."/>
        </authorList>
    </citation>
    <scope>SEQUENCE REVISION</scope>
</reference>
<reference key="8">
    <citation type="journal article" date="2003" name="N. Engl. J. Med.">
        <title>Estrogen excess associated with novel gain-of-function mutations affecting the aromatase gene.</title>
        <authorList>
            <person name="Shozu M."/>
            <person name="Sebastian S."/>
            <person name="Takayama K."/>
            <person name="Hsu W.T."/>
            <person name="Schultz R.A."/>
            <person name="Neely K."/>
            <person name="Bryant M."/>
            <person name="Bulun S.E."/>
        </authorList>
    </citation>
    <scope>INVOLVEMENT IN AEXS</scope>
</reference>
<reference key="9">
    <citation type="journal article" date="2011" name="Sci. Signal.">
        <title>System-wide temporal characterization of the proteome and phosphoproteome of human embryonic stem cell differentiation.</title>
        <authorList>
            <person name="Rigbolt K.T."/>
            <person name="Prokhorova T.A."/>
            <person name="Akimov V."/>
            <person name="Henningsen J."/>
            <person name="Johansen P.T."/>
            <person name="Kratchmarova I."/>
            <person name="Kassem M."/>
            <person name="Mann M."/>
            <person name="Olsen J.V."/>
            <person name="Blagoev B."/>
        </authorList>
    </citation>
    <scope>PHOSPHORYLATION [LARGE SCALE ANALYSIS] AT SER-283; SER-297 AND SER-298</scope>
    <scope>VARIANT [LARGE SCALE ANALYSIS] ALA-511</scope>
    <scope>IDENTIFICATION BY MASS SPECTROMETRY [LARGE SCALE ANALYSIS]</scope>
</reference>
<reference key="10">
    <citation type="journal article" date="2012" name="J. Cell Biol.">
        <title>Epithelial junction formation requires confinement of Cdc42 activity by a novel SH3BP1 complex.</title>
        <authorList>
            <person name="Elbediwy A."/>
            <person name="Zihni C."/>
            <person name="Terry S.J."/>
            <person name="Clark P."/>
            <person name="Matter K."/>
            <person name="Balda M.S."/>
        </authorList>
    </citation>
    <scope>FUNCTION</scope>
    <scope>INTERACTION WITH CD2AP AND SH3BP1</scope>
    <scope>SUBCELLULAR LOCATION</scope>
</reference>
<reference key="11">
    <citation type="journal article" date="2014" name="J. Proteomics">
        <title>An enzyme assisted RP-RPLC approach for in-depth analysis of human liver phosphoproteome.</title>
        <authorList>
            <person name="Bian Y."/>
            <person name="Song C."/>
            <person name="Cheng K."/>
            <person name="Dong M."/>
            <person name="Wang F."/>
            <person name="Huang J."/>
            <person name="Sun D."/>
            <person name="Wang L."/>
            <person name="Ye M."/>
            <person name="Zou H."/>
        </authorList>
    </citation>
    <scope>PHOSPHORYLATION [LARGE SCALE ANALYSIS] AT SER-112; SER-283; SER-298; SER-388; SER-391; SER-486 AND SER-708</scope>
    <scope>IDENTIFICATION BY MASS SPECTROMETRY [LARGE SCALE ANALYSIS]</scope>
    <source>
        <tissue>Liver</tissue>
    </source>
</reference>
<gene>
    <name type="primary">CGNL1</name>
    <name type="synonym">JACOP</name>
    <name type="synonym">KIAA1749</name>
</gene>
<proteinExistence type="evidence at protein level"/>
<dbReference type="EMBL" id="AY610514">
    <property type="protein sequence ID" value="AAT37906.1"/>
    <property type="molecule type" value="mRNA"/>
</dbReference>
<dbReference type="EMBL" id="AY274808">
    <property type="protein sequence ID" value="AAP42073.1"/>
    <property type="molecule type" value="mRNA"/>
</dbReference>
<dbReference type="EMBL" id="AK027863">
    <property type="protein sequence ID" value="BAB55415.1"/>
    <property type="molecule type" value="mRNA"/>
</dbReference>
<dbReference type="EMBL" id="AK056673">
    <property type="protein sequence ID" value="BAB71249.1"/>
    <property type="molecule type" value="mRNA"/>
</dbReference>
<dbReference type="EMBL" id="CH471082">
    <property type="protein sequence ID" value="EAW77521.1"/>
    <property type="molecule type" value="Genomic_DNA"/>
</dbReference>
<dbReference type="EMBL" id="BC030995">
    <property type="protein sequence ID" value="AAH30995.1"/>
    <property type="status" value="ALT_SEQ"/>
    <property type="molecule type" value="mRNA"/>
</dbReference>
<dbReference type="EMBL" id="BC093827">
    <property type="protein sequence ID" value="AAH93827.1"/>
    <property type="molecule type" value="mRNA"/>
</dbReference>
<dbReference type="EMBL" id="BC112049">
    <property type="protein sequence ID" value="AAI12050.1"/>
    <property type="molecule type" value="mRNA"/>
</dbReference>
<dbReference type="EMBL" id="BC118918">
    <property type="protein sequence ID" value="AAI18919.1"/>
    <property type="molecule type" value="mRNA"/>
</dbReference>
<dbReference type="EMBL" id="AB051536">
    <property type="protein sequence ID" value="BAB21840.2"/>
    <property type="molecule type" value="mRNA"/>
</dbReference>
<dbReference type="CCDS" id="CCDS10161.1">
    <molecule id="Q0VF96-1"/>
</dbReference>
<dbReference type="RefSeq" id="NP_001239264.1">
    <molecule id="Q0VF96-1"/>
    <property type="nucleotide sequence ID" value="NM_001252335.2"/>
</dbReference>
<dbReference type="RefSeq" id="NP_116255.2">
    <molecule id="Q0VF96-1"/>
    <property type="nucleotide sequence ID" value="NM_032866.4"/>
</dbReference>
<dbReference type="RefSeq" id="XP_016878175.1">
    <molecule id="Q0VF96-1"/>
    <property type="nucleotide sequence ID" value="XM_017022686.2"/>
</dbReference>
<dbReference type="RefSeq" id="XP_047289144.1">
    <molecule id="Q0VF96-1"/>
    <property type="nucleotide sequence ID" value="XM_047433188.1"/>
</dbReference>
<dbReference type="RefSeq" id="XP_047289145.1">
    <molecule id="Q0VF96-1"/>
    <property type="nucleotide sequence ID" value="XM_047433189.1"/>
</dbReference>
<dbReference type="RefSeq" id="XP_047289146.1">
    <molecule id="Q0VF96-1"/>
    <property type="nucleotide sequence ID" value="XM_047433190.1"/>
</dbReference>
<dbReference type="RefSeq" id="XP_047289147.1">
    <molecule id="Q0VF96-1"/>
    <property type="nucleotide sequence ID" value="XM_047433191.1"/>
</dbReference>
<dbReference type="RefSeq" id="XP_047289148.1">
    <molecule id="Q0VF96-1"/>
    <property type="nucleotide sequence ID" value="XM_047433192.1"/>
</dbReference>
<dbReference type="SMR" id="Q0VF96"/>
<dbReference type="BioGRID" id="124384">
    <property type="interactions" value="45"/>
</dbReference>
<dbReference type="FunCoup" id="Q0VF96">
    <property type="interactions" value="223"/>
</dbReference>
<dbReference type="IntAct" id="Q0VF96">
    <property type="interactions" value="22"/>
</dbReference>
<dbReference type="STRING" id="9606.ENSP00000281282"/>
<dbReference type="GlyGen" id="Q0VF96">
    <property type="glycosylation" value="2 sites, 3 N-linked glycans (1 site), 1 O-linked glycan (1 site)"/>
</dbReference>
<dbReference type="iPTMnet" id="Q0VF96"/>
<dbReference type="PhosphoSitePlus" id="Q0VF96"/>
<dbReference type="BioMuta" id="CGNL1"/>
<dbReference type="DMDM" id="332278171"/>
<dbReference type="jPOST" id="Q0VF96"/>
<dbReference type="MassIVE" id="Q0VF96"/>
<dbReference type="PaxDb" id="9606-ENSP00000281282"/>
<dbReference type="PeptideAtlas" id="Q0VF96"/>
<dbReference type="ProteomicsDB" id="58832">
    <molecule id="Q0VF96-1"/>
</dbReference>
<dbReference type="ProteomicsDB" id="58833">
    <molecule id="Q0VF96-2"/>
</dbReference>
<dbReference type="Pumba" id="Q0VF96"/>
<dbReference type="Antibodypedia" id="42720">
    <property type="antibodies" value="78 antibodies from 17 providers"/>
</dbReference>
<dbReference type="DNASU" id="84952"/>
<dbReference type="Ensembl" id="ENST00000281282.6">
    <molecule id="Q0VF96-1"/>
    <property type="protein sequence ID" value="ENSP00000281282.5"/>
    <property type="gene ID" value="ENSG00000128849.11"/>
</dbReference>
<dbReference type="GeneID" id="84952"/>
<dbReference type="KEGG" id="hsa:84952"/>
<dbReference type="MANE-Select" id="ENST00000281282.6">
    <property type="protein sequence ID" value="ENSP00000281282.5"/>
    <property type="RefSeq nucleotide sequence ID" value="NM_032866.5"/>
    <property type="RefSeq protein sequence ID" value="NP_116255.2"/>
</dbReference>
<dbReference type="UCSC" id="uc002aeg.3">
    <molecule id="Q0VF96-1"/>
    <property type="organism name" value="human"/>
</dbReference>
<dbReference type="AGR" id="HGNC:25931"/>
<dbReference type="CTD" id="84952"/>
<dbReference type="DisGeNET" id="84952"/>
<dbReference type="GeneCards" id="CGNL1"/>
<dbReference type="HGNC" id="HGNC:25931">
    <property type="gene designation" value="CGNL1"/>
</dbReference>
<dbReference type="HPA" id="ENSG00000128849">
    <property type="expression patterns" value="Tissue enhanced (kidney)"/>
</dbReference>
<dbReference type="MIM" id="139300">
    <property type="type" value="phenotype"/>
</dbReference>
<dbReference type="MIM" id="607856">
    <property type="type" value="gene"/>
</dbReference>
<dbReference type="neXtProt" id="NX_Q0VF96"/>
<dbReference type="OpenTargets" id="ENSG00000128849"/>
<dbReference type="PharmGKB" id="PA134972287"/>
<dbReference type="VEuPathDB" id="HostDB:ENSG00000128849"/>
<dbReference type="eggNOG" id="ENOG502QSXG">
    <property type="taxonomic scope" value="Eukaryota"/>
</dbReference>
<dbReference type="GeneTree" id="ENSGT00940000154489"/>
<dbReference type="HOGENOM" id="CLU_002036_2_1_1"/>
<dbReference type="InParanoid" id="Q0VF96"/>
<dbReference type="OMA" id="SEQNQVG"/>
<dbReference type="OrthoDB" id="6108017at2759"/>
<dbReference type="PAN-GO" id="Q0VF96">
    <property type="GO annotations" value="2 GO annotations based on evolutionary models"/>
</dbReference>
<dbReference type="PhylomeDB" id="Q0VF96"/>
<dbReference type="TreeFam" id="TF332247"/>
<dbReference type="PathwayCommons" id="Q0VF96"/>
<dbReference type="SignaLink" id="Q0VF96"/>
<dbReference type="BioGRID-ORCS" id="84952">
    <property type="hits" value="17 hits in 1151 CRISPR screens"/>
</dbReference>
<dbReference type="ChiTaRS" id="CGNL1">
    <property type="organism name" value="human"/>
</dbReference>
<dbReference type="GenomeRNAi" id="84952"/>
<dbReference type="Pharos" id="Q0VF96">
    <property type="development level" value="Tbio"/>
</dbReference>
<dbReference type="PRO" id="PR:Q0VF96"/>
<dbReference type="Proteomes" id="UP000005640">
    <property type="component" value="Chromosome 15"/>
</dbReference>
<dbReference type="RNAct" id="Q0VF96">
    <property type="molecule type" value="protein"/>
</dbReference>
<dbReference type="Bgee" id="ENSG00000128849">
    <property type="expression patterns" value="Expressed in kidney epithelium and 166 other cell types or tissues"/>
</dbReference>
<dbReference type="GO" id="GO:0005923">
    <property type="term" value="C:bicellular tight junction"/>
    <property type="evidence" value="ECO:0000318"/>
    <property type="project" value="GO_Central"/>
</dbReference>
<dbReference type="GO" id="GO:0016459">
    <property type="term" value="C:myosin complex"/>
    <property type="evidence" value="ECO:0007669"/>
    <property type="project" value="InterPro"/>
</dbReference>
<dbReference type="GO" id="GO:0032991">
    <property type="term" value="C:protein-containing complex"/>
    <property type="evidence" value="ECO:0000314"/>
    <property type="project" value="ARUK-UCL"/>
</dbReference>
<dbReference type="GO" id="GO:0007015">
    <property type="term" value="P:actin filament organization"/>
    <property type="evidence" value="ECO:0000315"/>
    <property type="project" value="UniProtKB"/>
</dbReference>
<dbReference type="GO" id="GO:0051058">
    <property type="term" value="P:negative regulation of small GTPase mediated signal transduction"/>
    <property type="evidence" value="ECO:0000315"/>
    <property type="project" value="UniProtKB"/>
</dbReference>
<dbReference type="GO" id="GO:0051497">
    <property type="term" value="P:negative regulation of stress fiber assembly"/>
    <property type="evidence" value="ECO:0000315"/>
    <property type="project" value="ARUK-UCL"/>
</dbReference>
<dbReference type="GO" id="GO:0150105">
    <property type="term" value="P:protein localization to cell-cell junction"/>
    <property type="evidence" value="ECO:0000315"/>
    <property type="project" value="ARUK-UCL"/>
</dbReference>
<dbReference type="InterPro" id="IPR002928">
    <property type="entry name" value="Myosin_tail"/>
</dbReference>
<dbReference type="PANTHER" id="PTHR46349:SF2">
    <property type="entry name" value="CINGULIN-LIKE PROTEIN 1"/>
    <property type="match status" value="1"/>
</dbReference>
<dbReference type="PANTHER" id="PTHR46349">
    <property type="entry name" value="CINGULIN-LIKE PROTEIN 1-RELATED"/>
    <property type="match status" value="1"/>
</dbReference>
<dbReference type="Pfam" id="PF01576">
    <property type="entry name" value="Myosin_tail_1"/>
    <property type="match status" value="2"/>
</dbReference>
<evidence type="ECO:0000250" key="1"/>
<evidence type="ECO:0000250" key="2">
    <source>
        <dbReference type="UniProtKB" id="Q6AW69"/>
    </source>
</evidence>
<evidence type="ECO:0000255" key="3"/>
<evidence type="ECO:0000256" key="4">
    <source>
        <dbReference type="SAM" id="MobiDB-lite"/>
    </source>
</evidence>
<evidence type="ECO:0000269" key="5">
    <source>
    </source>
</evidence>
<evidence type="ECO:0000269" key="6">
    <source>
    </source>
</evidence>
<evidence type="ECO:0000269" key="7">
    <source>
    </source>
</evidence>
<evidence type="ECO:0000269" key="8">
    <source>
    </source>
</evidence>
<evidence type="ECO:0000269" key="9">
    <source>
    </source>
</evidence>
<evidence type="ECO:0000269" key="10">
    <source ref="1"/>
</evidence>
<evidence type="ECO:0000269" key="11">
    <source ref="4"/>
</evidence>
<evidence type="ECO:0000303" key="12">
    <source>
    </source>
</evidence>
<evidence type="ECO:0000305" key="13"/>
<evidence type="ECO:0007744" key="14">
    <source>
    </source>
</evidence>
<evidence type="ECO:0007744" key="15">
    <source>
    </source>
</evidence>
<comment type="function">
    <text evidence="9">May be involved in anchoring the apical junctional complex, especially tight junctions, to actin-based cytoskeletons.</text>
</comment>
<comment type="subunit">
    <text evidence="2 9">Homodimer or oligomer (By similarity). Interacts with CD2AP and SH3BP1; probably part of a complex at cell junctions (PubMed:22891260).</text>
</comment>
<comment type="interaction">
    <interactant intactId="EBI-3388952">
        <id>Q0VF96</id>
    </interactant>
    <interactant intactId="EBI-356498">
        <id>P62258</id>
        <label>YWHAE</label>
    </interactant>
    <organismsDiffer>false</organismsDiffer>
    <experiments>3</experiments>
</comment>
<comment type="interaction">
    <interactant intactId="EBI-3388952">
        <id>Q0VF96</id>
    </interactant>
    <interactant intactId="EBI-359832">
        <id>P61981</id>
        <label>YWHAG</label>
    </interactant>
    <organismsDiffer>false</organismsDiffer>
    <experiments>5</experiments>
</comment>
<comment type="subcellular location">
    <subcellularLocation>
        <location evidence="2">Cell junction</location>
        <location evidence="2">Tight junction</location>
    </subcellularLocation>
    <text evidence="2 9">Localizes to the apical junction complex composed of tight and adherens junctions (PubMed:22891260). In the liver and kidney, it is also found along non-junctional actin filament bundles in addition to the apical junction (By similarity).</text>
</comment>
<comment type="alternative products">
    <event type="alternative splicing"/>
    <isoform>
        <id>Q0VF96-1</id>
        <name>1</name>
        <sequence type="displayed"/>
    </isoform>
    <isoform>
        <id>Q0VF96-2</id>
        <name>2</name>
        <sequence type="described" ref="VSP_029946"/>
    </isoform>
</comment>
<comment type="tissue specificity">
    <text evidence="5">Smooth muscle, spleen, testis, fetal brain, amygdala, corpus callosum, cerebellum, thalamus and subthalamic nucleus of adult brain.</text>
</comment>
<comment type="domain">
    <text evidence="2">The head region is responsible for both junction and actin filament-based distribution.</text>
</comment>
<comment type="disease" evidence="6">
    <disease id="DI-01569">
        <name>Aromatase excess syndrome</name>
        <acronym>AEXS</acronym>
        <description>An autosomal dominant disorder characterized by increased extraglandular aromatization of steroids that presents with heterosexual precocity in males and isosexual precocity in females.</description>
        <dbReference type="MIM" id="139300"/>
    </disease>
    <text>The gene represented in this entry is involved in disease pathogenesis. A chromosomal aberration inv(15)(q21.2;q21.3) has been found in patients with aromatase excess syndrome. The inversion moves the promoter of the CGNL1 gene into a 5-prime position in relation to the aromatase coding region.</text>
</comment>
<comment type="similarity">
    <text evidence="13">Belongs to the cingulin family.</text>
</comment>
<comment type="sequence caution" evidence="13">
    <conflict type="miscellaneous discrepancy">
        <sequence resource="EMBL-CDS" id="AAH30995"/>
    </conflict>
    <text>Contaminating sequence. Potential poly-A sequence.</text>
</comment>
<organism>
    <name type="scientific">Homo sapiens</name>
    <name type="common">Human</name>
    <dbReference type="NCBI Taxonomy" id="9606"/>
    <lineage>
        <taxon>Eukaryota</taxon>
        <taxon>Metazoa</taxon>
        <taxon>Chordata</taxon>
        <taxon>Craniata</taxon>
        <taxon>Vertebrata</taxon>
        <taxon>Euteleostomi</taxon>
        <taxon>Mammalia</taxon>
        <taxon>Eutheria</taxon>
        <taxon>Euarchontoglires</taxon>
        <taxon>Primates</taxon>
        <taxon>Haplorrhini</taxon>
        <taxon>Catarrhini</taxon>
        <taxon>Hominidae</taxon>
        <taxon>Homo</taxon>
    </lineage>
</organism>
<keyword id="KW-0025">Alternative splicing</keyword>
<keyword id="KW-0965">Cell junction</keyword>
<keyword id="KW-0160">Chromosomal rearrangement</keyword>
<keyword id="KW-0175">Coiled coil</keyword>
<keyword id="KW-0597">Phosphoprotein</keyword>
<keyword id="KW-1267">Proteomics identification</keyword>
<keyword id="KW-1185">Reference proteome</keyword>
<keyword id="KW-0796">Tight junction</keyword>